<evidence type="ECO:0000255" key="1">
    <source>
        <dbReference type="HAMAP-Rule" id="MF_00744"/>
    </source>
</evidence>
<sequence>MAEWSGEYISPYAEHGKKSEQVKKITVSIPLKVLKILTDERTRRQVNNLRHATNSELLCEAFLHAFTGQPLPDDADLRKERSDEIPEAAKEIMREMGIDPETWEY</sequence>
<protein>
    <recommendedName>
        <fullName evidence="1">Met repressor</fullName>
    </recommendedName>
    <alternativeName>
        <fullName evidence="1">Met regulon regulatory protein MetJ</fullName>
    </alternativeName>
</protein>
<keyword id="KW-0028">Amino-acid biosynthesis</keyword>
<keyword id="KW-0963">Cytoplasm</keyword>
<keyword id="KW-0238">DNA-binding</keyword>
<keyword id="KW-0486">Methionine biosynthesis</keyword>
<keyword id="KW-0678">Repressor</keyword>
<keyword id="KW-0804">Transcription</keyword>
<keyword id="KW-0805">Transcription regulation</keyword>
<comment type="function">
    <text evidence="1">This regulatory protein, when combined with SAM (S-adenosylmethionine) represses the expression of the methionine regulon and of enzymes involved in SAM synthesis.</text>
</comment>
<comment type="subunit">
    <text evidence="1">Homodimer.</text>
</comment>
<comment type="subcellular location">
    <subcellularLocation>
        <location evidence="1">Cytoplasm</location>
    </subcellularLocation>
</comment>
<comment type="domain">
    <text>Does not bind DNA by a helix-turn-helix motif.</text>
</comment>
<comment type="similarity">
    <text evidence="1">Belongs to the MetJ family.</text>
</comment>
<proteinExistence type="inferred from homology"/>
<accession>B5BJL6</accession>
<organism>
    <name type="scientific">Salmonella paratyphi A (strain AKU_12601)</name>
    <dbReference type="NCBI Taxonomy" id="554290"/>
    <lineage>
        <taxon>Bacteria</taxon>
        <taxon>Pseudomonadati</taxon>
        <taxon>Pseudomonadota</taxon>
        <taxon>Gammaproteobacteria</taxon>
        <taxon>Enterobacterales</taxon>
        <taxon>Enterobacteriaceae</taxon>
        <taxon>Salmonella</taxon>
    </lineage>
</organism>
<reference key="1">
    <citation type="journal article" date="2009" name="BMC Genomics">
        <title>Pseudogene accumulation in the evolutionary histories of Salmonella enterica serovars Paratyphi A and Typhi.</title>
        <authorList>
            <person name="Holt K.E."/>
            <person name="Thomson N.R."/>
            <person name="Wain J."/>
            <person name="Langridge G.C."/>
            <person name="Hasan R."/>
            <person name="Bhutta Z.A."/>
            <person name="Quail M.A."/>
            <person name="Norbertczak H."/>
            <person name="Walker D."/>
            <person name="Simmonds M."/>
            <person name="White B."/>
            <person name="Bason N."/>
            <person name="Mungall K."/>
            <person name="Dougan G."/>
            <person name="Parkhill J."/>
        </authorList>
    </citation>
    <scope>NUCLEOTIDE SEQUENCE [LARGE SCALE GENOMIC DNA]</scope>
    <source>
        <strain>AKU_12601</strain>
    </source>
</reference>
<gene>
    <name evidence="1" type="primary">metJ</name>
    <name type="ordered locus">SSPA3669</name>
</gene>
<name>METJ_SALPK</name>
<feature type="chain" id="PRO_1000133221" description="Met repressor">
    <location>
        <begin position="1"/>
        <end position="105"/>
    </location>
</feature>
<dbReference type="EMBL" id="FM200053">
    <property type="protein sequence ID" value="CAR61951.1"/>
    <property type="molecule type" value="Genomic_DNA"/>
</dbReference>
<dbReference type="RefSeq" id="WP_000852811.1">
    <property type="nucleotide sequence ID" value="NC_011147.1"/>
</dbReference>
<dbReference type="SMR" id="B5BJL6"/>
<dbReference type="GeneID" id="66758351"/>
<dbReference type="KEGG" id="sek:SSPA3669"/>
<dbReference type="HOGENOM" id="CLU_142318_0_0_6"/>
<dbReference type="Proteomes" id="UP000001869">
    <property type="component" value="Chromosome"/>
</dbReference>
<dbReference type="GO" id="GO:0005737">
    <property type="term" value="C:cytoplasm"/>
    <property type="evidence" value="ECO:0007669"/>
    <property type="project" value="UniProtKB-SubCell"/>
</dbReference>
<dbReference type="GO" id="GO:0003677">
    <property type="term" value="F:DNA binding"/>
    <property type="evidence" value="ECO:0007669"/>
    <property type="project" value="UniProtKB-KW"/>
</dbReference>
<dbReference type="GO" id="GO:0003700">
    <property type="term" value="F:DNA-binding transcription factor activity"/>
    <property type="evidence" value="ECO:0007669"/>
    <property type="project" value="InterPro"/>
</dbReference>
<dbReference type="GO" id="GO:0009086">
    <property type="term" value="P:methionine biosynthetic process"/>
    <property type="evidence" value="ECO:0007669"/>
    <property type="project" value="UniProtKB-UniRule"/>
</dbReference>
<dbReference type="GO" id="GO:0045892">
    <property type="term" value="P:negative regulation of DNA-templated transcription"/>
    <property type="evidence" value="ECO:0007669"/>
    <property type="project" value="UniProtKB-UniRule"/>
</dbReference>
<dbReference type="CDD" id="cd00490">
    <property type="entry name" value="Met_repressor_MetJ"/>
    <property type="match status" value="1"/>
</dbReference>
<dbReference type="FunFam" id="1.10.140.10:FF:000001">
    <property type="entry name" value="Met repressor"/>
    <property type="match status" value="1"/>
</dbReference>
<dbReference type="Gene3D" id="1.10.140.10">
    <property type="entry name" value="MET Apo-Repressor, subunit A"/>
    <property type="match status" value="1"/>
</dbReference>
<dbReference type="HAMAP" id="MF_00744">
    <property type="entry name" value="MetJ"/>
    <property type="match status" value="1"/>
</dbReference>
<dbReference type="InterPro" id="IPR002084">
    <property type="entry name" value="Met_repressor_MetJ"/>
</dbReference>
<dbReference type="InterPro" id="IPR023453">
    <property type="entry name" value="Met_repressor_MetJ_dom_sf"/>
</dbReference>
<dbReference type="InterPro" id="IPR010985">
    <property type="entry name" value="Ribbon_hlx_hlx"/>
</dbReference>
<dbReference type="NCBIfam" id="NF003622">
    <property type="entry name" value="PRK05264.1"/>
    <property type="match status" value="1"/>
</dbReference>
<dbReference type="Pfam" id="PF01340">
    <property type="entry name" value="MetJ"/>
    <property type="match status" value="1"/>
</dbReference>
<dbReference type="SUPFAM" id="SSF47598">
    <property type="entry name" value="Ribbon-helix-helix"/>
    <property type="match status" value="1"/>
</dbReference>